<geneLocation type="chloroplast"/>
<dbReference type="EMBL" id="AB080927">
    <property type="protein sequence ID" value="BAC11930.1"/>
    <property type="molecule type" value="Genomic_DNA"/>
</dbReference>
<dbReference type="GO" id="GO:0009507">
    <property type="term" value="C:chloroplast"/>
    <property type="evidence" value="ECO:0007669"/>
    <property type="project" value="UniProtKB-SubCell"/>
</dbReference>
<dbReference type="GO" id="GO:0003723">
    <property type="term" value="F:RNA binding"/>
    <property type="evidence" value="ECO:0007669"/>
    <property type="project" value="UniProtKB-KW"/>
</dbReference>
<dbReference type="GO" id="GO:0006397">
    <property type="term" value="P:mRNA processing"/>
    <property type="evidence" value="ECO:0007669"/>
    <property type="project" value="UniProtKB-KW"/>
</dbReference>
<dbReference type="GO" id="GO:0008380">
    <property type="term" value="P:RNA splicing"/>
    <property type="evidence" value="ECO:0007669"/>
    <property type="project" value="UniProtKB-UniRule"/>
</dbReference>
<dbReference type="GO" id="GO:0008033">
    <property type="term" value="P:tRNA processing"/>
    <property type="evidence" value="ECO:0007669"/>
    <property type="project" value="UniProtKB-KW"/>
</dbReference>
<dbReference type="HAMAP" id="MF_01390">
    <property type="entry name" value="MatK"/>
    <property type="match status" value="1"/>
</dbReference>
<dbReference type="InterPro" id="IPR024937">
    <property type="entry name" value="Domain_X"/>
</dbReference>
<dbReference type="InterPro" id="IPR002866">
    <property type="entry name" value="Maturase_MatK"/>
</dbReference>
<dbReference type="InterPro" id="IPR024942">
    <property type="entry name" value="Maturase_MatK_N"/>
</dbReference>
<dbReference type="PANTHER" id="PTHR34811">
    <property type="entry name" value="MATURASE K"/>
    <property type="match status" value="1"/>
</dbReference>
<dbReference type="PANTHER" id="PTHR34811:SF1">
    <property type="entry name" value="MATURASE K"/>
    <property type="match status" value="1"/>
</dbReference>
<dbReference type="Pfam" id="PF01348">
    <property type="entry name" value="Intron_maturas2"/>
    <property type="match status" value="1"/>
</dbReference>
<dbReference type="Pfam" id="PF01824">
    <property type="entry name" value="MatK_N"/>
    <property type="match status" value="1"/>
</dbReference>
<evidence type="ECO:0000255" key="1">
    <source>
        <dbReference type="HAMAP-Rule" id="MF_01390"/>
    </source>
</evidence>
<gene>
    <name evidence="1" type="primary">matK</name>
</gene>
<feature type="chain" id="PRO_0000143613" description="Maturase K">
    <location>
        <begin position="1"/>
        <end position="515"/>
    </location>
</feature>
<accession>Q8HQT6</accession>
<reference key="1">
    <citation type="submission" date="2002-03" db="EMBL/GenBank/DDBJ databases">
        <title>Phylogeny of the North American pines.</title>
        <authorList>
            <person name="Geada Lopez G."/>
            <person name="Kamiya K."/>
            <person name="Harada K."/>
        </authorList>
    </citation>
    <scope>NUCLEOTIDE SEQUENCE [GENOMIC DNA]</scope>
    <source>
        <tissue>Leaf</tissue>
    </source>
</reference>
<name>MATK_PINEG</name>
<keyword id="KW-0150">Chloroplast</keyword>
<keyword id="KW-0507">mRNA processing</keyword>
<keyword id="KW-0934">Plastid</keyword>
<keyword id="KW-0694">RNA-binding</keyword>
<keyword id="KW-0819">tRNA processing</keyword>
<protein>
    <recommendedName>
        <fullName evidence="1">Maturase K</fullName>
    </recommendedName>
    <alternativeName>
        <fullName evidence="1">Intron maturase</fullName>
    </alternativeName>
</protein>
<sequence length="515" mass="61033">MDEFHRCGKEDSFWQQCFLYPLFFQEDLYAISHDHYLDVSSSSRPMEHLSSNDQLSFLTVKRLIGQIRQQNHSIVLFVNCDPNPLADRKKSFYSESVLEALTLVLEVPFSIWSKYSVEGMNESKSFRSIHSIFPFLEDKFPHSNSILDARIPYSIHPEILVRTFRRWIRDAPSLHPLRSVLYEYRNSPDNLQRSIIVVPRVNTRFFLFLWNYYVCECESILFSRLKRSSHSRSLSHGSFPQRTHFHRKIKHIIIFSRRNSLKSIWSLKDPKIHYVRYGERPIIAIKGAHLLVKKCRYYLLIFRQFYFHLWSEPYRVCSHQLSKNCSSSPGYFLRVRMNPILVRTKMLDELFIADLITDEIDPIVPIVPIIGLLATEKFCDISGRPISKLSWTSLTDDDILDRFDQIWRNLFHYYSGSFDRDGLYRIKYILSLSCAKTLACKHKSTIRVVRKELGPELFKKSFSKEREFYSLRFSSKAAARSQRERIWHSDIPQINPLANSWQKIQDLKIENLFDQ</sequence>
<organism>
    <name type="scientific">Pinus engelmannii</name>
    <name type="common">Apache pine</name>
    <name type="synonym">Pinus macrophylla</name>
    <dbReference type="NCBI Taxonomy" id="55060"/>
    <lineage>
        <taxon>Eukaryota</taxon>
        <taxon>Viridiplantae</taxon>
        <taxon>Streptophyta</taxon>
        <taxon>Embryophyta</taxon>
        <taxon>Tracheophyta</taxon>
        <taxon>Spermatophyta</taxon>
        <taxon>Pinopsida</taxon>
        <taxon>Pinidae</taxon>
        <taxon>Conifers I</taxon>
        <taxon>Pinales</taxon>
        <taxon>Pinaceae</taxon>
        <taxon>Pinus</taxon>
        <taxon>Pinus subgen. Pinus</taxon>
    </lineage>
</organism>
<comment type="function">
    <text evidence="1">Usually encoded in the trnK tRNA gene intron. Probably assists in splicing its own and other chloroplast group II introns.</text>
</comment>
<comment type="subcellular location">
    <subcellularLocation>
        <location>Plastid</location>
        <location>Chloroplast</location>
    </subcellularLocation>
</comment>
<comment type="similarity">
    <text evidence="1">Belongs to the intron maturase 2 family. MatK subfamily.</text>
</comment>
<proteinExistence type="inferred from homology"/>